<sequence length="1201" mass="134502">MAGHLVKYGKHRTRRSYARIKEVLDLPNLIEIQTDSYQWFLDEGLREMFEDIMPIDDFAGKLSLEFVDYQLLEPKYTVEEAREHDANYSAPLHVTLRLTNHETGEIKSQDVFFGDFPLMTEQGTFIINGAERVIVSQLVRSPGVYFNEELDKNGRPSYGTTVIPNRGAWLELETDAKNVSYVRIDRTRKIPLTELVRALGYGSDDDIIDMLGETDSLMLTLEKDVHKNTDDSRVEESLKDIYERLRPGEPKTADSSRSLLTARFFDPKRYDFAPVGRYKVNKKLSMKTRLMDQTLAETLADPDTGEVIAQKDTVIDKNVMAKLSPYLERDDFKTVTYTPSDEAVVTNPMVLQVVKVYSQNDPEKVVNVIGNGNIDLKFKHIVPADIIASINYFFNLQEGLGSTDDIDHLGNRRIRSVGELLQNQFRIGLSRMERVVRERMSIQDAATVTPQQLINIRPVVASIKEFFGSSQLSQFMDQTNPLGELTHKRRLSALGPGGLTRDRAGYEVRDVHYTHYGRMCPIETPEGPNIGLINSLSSYAKVNRSGFIETPYRRVDWTTHKVTDKIDYLAADEEDQFVIAQANSPLNDDGSFVEDTVLARNKEENLETPIENVDYMDVSPKQVVAVATACIPFLENDDSNRALMGANMQRQAVPLLDPHAPLIGTGIEYKAAHDSGIALICRHEGTVEYVDAREVRVRRDDGSLDTYKLMKFRRSNGGKNYNQRPIVKVGDHVDNDEVLADGPAMEGGELALGQNPLVAFMTWNGYNFEDAIIINERLVREDVYTSIHIEEYESEARDTKLGPEEMTREIPNVGEDALKNLDEDGIIRIGAEVKDGDILVGKVTPKGVTELSAEERLLHAIFGEKAREVRDTSLRVPHGGGGIIQDVKIFTRENGDELSPGVNMMVRVYIAQKRKIQVGDKMAGRHGNKGTVSIVVPEEDMPYMPDGTPIDIMLSPMGVPSRMNIGQVLELHLGMAARKLGIHMATPVFDGAQDTDIWEAIREAGVDSDAKSIVYDGRTGEPFDKRVAVGVMHYMKLSHMVDDKIHARSIGPYSLVTQQPLGGKAQFGGQRFGEMEVWALEAYGAAYTLQEILTYKSDDVVGRVKTYEAIVKGEPIPKPGVPESFRVLVKELQALGLDMKVLDSEDKEIELRDMDDDDDEVVNVDALSKFKQQQDEKAADKAAKADAAKPSETTNAQQDNQ</sequence>
<organism>
    <name type="scientific">Lactiplantibacillus plantarum (strain ATCC BAA-793 / NCIMB 8826 / WCFS1)</name>
    <name type="common">Lactobacillus plantarum</name>
    <dbReference type="NCBI Taxonomy" id="220668"/>
    <lineage>
        <taxon>Bacteria</taxon>
        <taxon>Bacillati</taxon>
        <taxon>Bacillota</taxon>
        <taxon>Bacilli</taxon>
        <taxon>Lactobacillales</taxon>
        <taxon>Lactobacillaceae</taxon>
        <taxon>Lactiplantibacillus</taxon>
    </lineage>
</organism>
<reference key="1">
    <citation type="journal article" date="2003" name="Proc. Natl. Acad. Sci. U.S.A.">
        <title>Complete genome sequence of Lactobacillus plantarum WCFS1.</title>
        <authorList>
            <person name="Kleerebezem M."/>
            <person name="Boekhorst J."/>
            <person name="van Kranenburg R."/>
            <person name="Molenaar D."/>
            <person name="Kuipers O.P."/>
            <person name="Leer R."/>
            <person name="Tarchini R."/>
            <person name="Peters S.A."/>
            <person name="Sandbrink H.M."/>
            <person name="Fiers M.W.E.J."/>
            <person name="Stiekema W."/>
            <person name="Klein Lankhorst R.M."/>
            <person name="Bron P.A."/>
            <person name="Hoffer S.M."/>
            <person name="Nierop Groot M.N."/>
            <person name="Kerkhoven R."/>
            <person name="De Vries M."/>
            <person name="Ursing B."/>
            <person name="De Vos W.M."/>
            <person name="Siezen R.J."/>
        </authorList>
    </citation>
    <scope>NUCLEOTIDE SEQUENCE [LARGE SCALE GENOMIC DNA]</scope>
    <source>
        <strain>ATCC BAA-793 / NCIMB 8826 / WCFS1</strain>
    </source>
</reference>
<reference key="2">
    <citation type="journal article" date="2012" name="J. Bacteriol.">
        <title>Complete resequencing and reannotation of the Lactobacillus plantarum WCFS1 genome.</title>
        <authorList>
            <person name="Siezen R.J."/>
            <person name="Francke C."/>
            <person name="Renckens B."/>
            <person name="Boekhorst J."/>
            <person name="Wels M."/>
            <person name="Kleerebezem M."/>
            <person name="van Hijum S.A."/>
        </authorList>
    </citation>
    <scope>NUCLEOTIDE SEQUENCE [LARGE SCALE GENOMIC DNA]</scope>
    <scope>GENOME REANNOTATION</scope>
    <source>
        <strain>ATCC BAA-793 / NCIMB 8826 / WCFS1</strain>
    </source>
</reference>
<proteinExistence type="inferred from homology"/>
<dbReference type="EC" id="2.7.7.6" evidence="1"/>
<dbReference type="EMBL" id="AL935263">
    <property type="protein sequence ID" value="CCC78437.1"/>
    <property type="molecule type" value="Genomic_DNA"/>
</dbReference>
<dbReference type="RefSeq" id="YP_004888951.1">
    <property type="nucleotide sequence ID" value="NC_004567.2"/>
</dbReference>
<dbReference type="SMR" id="Q88XZ3"/>
<dbReference type="STRING" id="220668.lp_1021"/>
<dbReference type="EnsemblBacteria" id="CCC78437">
    <property type="protein sequence ID" value="CCC78437"/>
    <property type="gene ID" value="lp_1021"/>
</dbReference>
<dbReference type="KEGG" id="lpl:lp_1021"/>
<dbReference type="PATRIC" id="fig|220668.9.peg.863"/>
<dbReference type="eggNOG" id="COG0085">
    <property type="taxonomic scope" value="Bacteria"/>
</dbReference>
<dbReference type="HOGENOM" id="CLU_000524_4_1_9"/>
<dbReference type="OrthoDB" id="9803954at2"/>
<dbReference type="PhylomeDB" id="Q88XZ3"/>
<dbReference type="Proteomes" id="UP000000432">
    <property type="component" value="Chromosome"/>
</dbReference>
<dbReference type="GO" id="GO:0000428">
    <property type="term" value="C:DNA-directed RNA polymerase complex"/>
    <property type="evidence" value="ECO:0007669"/>
    <property type="project" value="UniProtKB-KW"/>
</dbReference>
<dbReference type="GO" id="GO:0003677">
    <property type="term" value="F:DNA binding"/>
    <property type="evidence" value="ECO:0007669"/>
    <property type="project" value="UniProtKB-UniRule"/>
</dbReference>
<dbReference type="GO" id="GO:0003899">
    <property type="term" value="F:DNA-directed RNA polymerase activity"/>
    <property type="evidence" value="ECO:0007669"/>
    <property type="project" value="UniProtKB-UniRule"/>
</dbReference>
<dbReference type="GO" id="GO:0032549">
    <property type="term" value="F:ribonucleoside binding"/>
    <property type="evidence" value="ECO:0007669"/>
    <property type="project" value="InterPro"/>
</dbReference>
<dbReference type="GO" id="GO:0006351">
    <property type="term" value="P:DNA-templated transcription"/>
    <property type="evidence" value="ECO:0007669"/>
    <property type="project" value="UniProtKB-UniRule"/>
</dbReference>
<dbReference type="CDD" id="cd00653">
    <property type="entry name" value="RNA_pol_B_RPB2"/>
    <property type="match status" value="1"/>
</dbReference>
<dbReference type="FunFam" id="3.90.1800.10:FF:000001">
    <property type="entry name" value="DNA-directed RNA polymerase subunit beta"/>
    <property type="match status" value="1"/>
</dbReference>
<dbReference type="Gene3D" id="2.40.50.100">
    <property type="match status" value="1"/>
</dbReference>
<dbReference type="Gene3D" id="2.40.50.150">
    <property type="match status" value="1"/>
</dbReference>
<dbReference type="Gene3D" id="3.90.1100.10">
    <property type="match status" value="2"/>
</dbReference>
<dbReference type="Gene3D" id="2.30.150.10">
    <property type="entry name" value="DNA-directed RNA polymerase, beta subunit, external 1 domain"/>
    <property type="match status" value="1"/>
</dbReference>
<dbReference type="Gene3D" id="2.40.270.10">
    <property type="entry name" value="DNA-directed RNA polymerase, subunit 2, domain 6"/>
    <property type="match status" value="1"/>
</dbReference>
<dbReference type="Gene3D" id="3.90.1800.10">
    <property type="entry name" value="RNA polymerase alpha subunit dimerisation domain"/>
    <property type="match status" value="1"/>
</dbReference>
<dbReference type="Gene3D" id="3.90.1110.10">
    <property type="entry name" value="RNA polymerase Rpb2, domain 2"/>
    <property type="match status" value="1"/>
</dbReference>
<dbReference type="HAMAP" id="MF_01321">
    <property type="entry name" value="RNApol_bact_RpoB"/>
    <property type="match status" value="1"/>
</dbReference>
<dbReference type="InterPro" id="IPR042107">
    <property type="entry name" value="DNA-dir_RNA_pol_bsu_ext_1_sf"/>
</dbReference>
<dbReference type="InterPro" id="IPR019462">
    <property type="entry name" value="DNA-dir_RNA_pol_bsu_external_1"/>
</dbReference>
<dbReference type="InterPro" id="IPR015712">
    <property type="entry name" value="DNA-dir_RNA_pol_su2"/>
</dbReference>
<dbReference type="InterPro" id="IPR007120">
    <property type="entry name" value="DNA-dir_RNAP_su2_dom"/>
</dbReference>
<dbReference type="InterPro" id="IPR037033">
    <property type="entry name" value="DNA-dir_RNAP_su2_hyb_sf"/>
</dbReference>
<dbReference type="InterPro" id="IPR010243">
    <property type="entry name" value="RNA_pol_bsu_bac"/>
</dbReference>
<dbReference type="InterPro" id="IPR007121">
    <property type="entry name" value="RNA_pol_bsu_CS"/>
</dbReference>
<dbReference type="InterPro" id="IPR007644">
    <property type="entry name" value="RNA_pol_bsu_protrusion"/>
</dbReference>
<dbReference type="InterPro" id="IPR007642">
    <property type="entry name" value="RNA_pol_Rpb2_2"/>
</dbReference>
<dbReference type="InterPro" id="IPR037034">
    <property type="entry name" value="RNA_pol_Rpb2_2_sf"/>
</dbReference>
<dbReference type="InterPro" id="IPR007645">
    <property type="entry name" value="RNA_pol_Rpb2_3"/>
</dbReference>
<dbReference type="InterPro" id="IPR007641">
    <property type="entry name" value="RNA_pol_Rpb2_7"/>
</dbReference>
<dbReference type="InterPro" id="IPR014724">
    <property type="entry name" value="RNA_pol_RPB2_OB-fold"/>
</dbReference>
<dbReference type="NCBIfam" id="NF001616">
    <property type="entry name" value="PRK00405.1"/>
    <property type="match status" value="1"/>
</dbReference>
<dbReference type="NCBIfam" id="TIGR02013">
    <property type="entry name" value="rpoB"/>
    <property type="match status" value="1"/>
</dbReference>
<dbReference type="PANTHER" id="PTHR20856">
    <property type="entry name" value="DNA-DIRECTED RNA POLYMERASE I SUBUNIT 2"/>
    <property type="match status" value="1"/>
</dbReference>
<dbReference type="Pfam" id="PF04563">
    <property type="entry name" value="RNA_pol_Rpb2_1"/>
    <property type="match status" value="1"/>
</dbReference>
<dbReference type="Pfam" id="PF04561">
    <property type="entry name" value="RNA_pol_Rpb2_2"/>
    <property type="match status" value="2"/>
</dbReference>
<dbReference type="Pfam" id="PF04565">
    <property type="entry name" value="RNA_pol_Rpb2_3"/>
    <property type="match status" value="1"/>
</dbReference>
<dbReference type="Pfam" id="PF10385">
    <property type="entry name" value="RNA_pol_Rpb2_45"/>
    <property type="match status" value="1"/>
</dbReference>
<dbReference type="Pfam" id="PF00562">
    <property type="entry name" value="RNA_pol_Rpb2_6"/>
    <property type="match status" value="1"/>
</dbReference>
<dbReference type="Pfam" id="PF04560">
    <property type="entry name" value="RNA_pol_Rpb2_7"/>
    <property type="match status" value="1"/>
</dbReference>
<dbReference type="SUPFAM" id="SSF64484">
    <property type="entry name" value="beta and beta-prime subunits of DNA dependent RNA-polymerase"/>
    <property type="match status" value="1"/>
</dbReference>
<dbReference type="PROSITE" id="PS01166">
    <property type="entry name" value="RNA_POL_BETA"/>
    <property type="match status" value="1"/>
</dbReference>
<keyword id="KW-0240">DNA-directed RNA polymerase</keyword>
<keyword id="KW-0548">Nucleotidyltransferase</keyword>
<keyword id="KW-1185">Reference proteome</keyword>
<keyword id="KW-0804">Transcription</keyword>
<keyword id="KW-0808">Transferase</keyword>
<comment type="function">
    <text evidence="1">DNA-dependent RNA polymerase catalyzes the transcription of DNA into RNA using the four ribonucleoside triphosphates as substrates.</text>
</comment>
<comment type="catalytic activity">
    <reaction evidence="1">
        <text>RNA(n) + a ribonucleoside 5'-triphosphate = RNA(n+1) + diphosphate</text>
        <dbReference type="Rhea" id="RHEA:21248"/>
        <dbReference type="Rhea" id="RHEA-COMP:14527"/>
        <dbReference type="Rhea" id="RHEA-COMP:17342"/>
        <dbReference type="ChEBI" id="CHEBI:33019"/>
        <dbReference type="ChEBI" id="CHEBI:61557"/>
        <dbReference type="ChEBI" id="CHEBI:140395"/>
        <dbReference type="EC" id="2.7.7.6"/>
    </reaction>
</comment>
<comment type="subunit">
    <text evidence="1">The RNAP catalytic core consists of 2 alpha, 1 beta, 1 beta' and 1 omega subunit. When a sigma factor is associated with the core the holoenzyme is formed, which can initiate transcription.</text>
</comment>
<comment type="similarity">
    <text evidence="1">Belongs to the RNA polymerase beta chain family.</text>
</comment>
<protein>
    <recommendedName>
        <fullName evidence="1">DNA-directed RNA polymerase subunit beta</fullName>
        <shortName evidence="1">RNAP subunit beta</shortName>
        <ecNumber evidence="1">2.7.7.6</ecNumber>
    </recommendedName>
    <alternativeName>
        <fullName evidence="1">RNA polymerase subunit beta</fullName>
    </alternativeName>
    <alternativeName>
        <fullName evidence="1">Transcriptase subunit beta</fullName>
    </alternativeName>
</protein>
<gene>
    <name evidence="1" type="primary">rpoB</name>
    <name type="ordered locus">lp_1021</name>
</gene>
<name>RPOB_LACPL</name>
<evidence type="ECO:0000255" key="1">
    <source>
        <dbReference type="HAMAP-Rule" id="MF_01321"/>
    </source>
</evidence>
<evidence type="ECO:0000256" key="2">
    <source>
        <dbReference type="SAM" id="MobiDB-lite"/>
    </source>
</evidence>
<feature type="chain" id="PRO_0000047908" description="DNA-directed RNA polymerase subunit beta">
    <location>
        <begin position="1"/>
        <end position="1201"/>
    </location>
</feature>
<feature type="region of interest" description="Disordered" evidence="2">
    <location>
        <begin position="1165"/>
        <end position="1201"/>
    </location>
</feature>
<feature type="compositionally biased region" description="Basic and acidic residues" evidence="2">
    <location>
        <begin position="1172"/>
        <end position="1189"/>
    </location>
</feature>
<feature type="compositionally biased region" description="Polar residues" evidence="2">
    <location>
        <begin position="1191"/>
        <end position="1201"/>
    </location>
</feature>
<accession>Q88XZ3</accession>
<accession>F9UMJ8</accession>